<comment type="function">
    <text evidence="1">O-methyltransferase that catalyzes the 2 O-methylation steps in the ubiquinone biosynthetic pathway.</text>
</comment>
<comment type="catalytic activity">
    <reaction evidence="1">
        <text>a 3-demethylubiquinol + S-adenosyl-L-methionine = a ubiquinol + S-adenosyl-L-homocysteine + H(+)</text>
        <dbReference type="Rhea" id="RHEA:44380"/>
        <dbReference type="Rhea" id="RHEA-COMP:9566"/>
        <dbReference type="Rhea" id="RHEA-COMP:10914"/>
        <dbReference type="ChEBI" id="CHEBI:15378"/>
        <dbReference type="ChEBI" id="CHEBI:17976"/>
        <dbReference type="ChEBI" id="CHEBI:57856"/>
        <dbReference type="ChEBI" id="CHEBI:59789"/>
        <dbReference type="ChEBI" id="CHEBI:84422"/>
        <dbReference type="EC" id="2.1.1.64"/>
    </reaction>
</comment>
<comment type="catalytic activity">
    <reaction evidence="1">
        <text>a 3-(all-trans-polyprenyl)benzene-1,2-diol + S-adenosyl-L-methionine = a 2-methoxy-6-(all-trans-polyprenyl)phenol + S-adenosyl-L-homocysteine + H(+)</text>
        <dbReference type="Rhea" id="RHEA:31411"/>
        <dbReference type="Rhea" id="RHEA-COMP:9550"/>
        <dbReference type="Rhea" id="RHEA-COMP:9551"/>
        <dbReference type="ChEBI" id="CHEBI:15378"/>
        <dbReference type="ChEBI" id="CHEBI:57856"/>
        <dbReference type="ChEBI" id="CHEBI:59789"/>
        <dbReference type="ChEBI" id="CHEBI:62729"/>
        <dbReference type="ChEBI" id="CHEBI:62731"/>
        <dbReference type="EC" id="2.1.1.222"/>
    </reaction>
</comment>
<comment type="pathway">
    <text evidence="1">Cofactor biosynthesis; ubiquinone biosynthesis.</text>
</comment>
<comment type="similarity">
    <text evidence="1">Belongs to the methyltransferase superfamily. UbiG/COQ3 family.</text>
</comment>
<comment type="sequence caution" evidence="2">
    <conflict type="erroneous initiation">
        <sequence resource="EMBL-CDS" id="AAX66185"/>
    </conflict>
</comment>
<proteinExistence type="inferred from homology"/>
<reference key="1">
    <citation type="journal article" date="2005" name="Nucleic Acids Res.">
        <title>The genome sequence of Salmonella enterica serovar Choleraesuis, a highly invasive and resistant zoonotic pathogen.</title>
        <authorList>
            <person name="Chiu C.-H."/>
            <person name="Tang P."/>
            <person name="Chu C."/>
            <person name="Hu S."/>
            <person name="Bao Q."/>
            <person name="Yu J."/>
            <person name="Chou Y.-Y."/>
            <person name="Wang H.-S."/>
            <person name="Lee Y.-S."/>
        </authorList>
    </citation>
    <scope>NUCLEOTIDE SEQUENCE [LARGE SCALE GENOMIC DNA]</scope>
    <source>
        <strain>SC-B67</strain>
    </source>
</reference>
<evidence type="ECO:0000255" key="1">
    <source>
        <dbReference type="HAMAP-Rule" id="MF_00472"/>
    </source>
</evidence>
<evidence type="ECO:0000305" key="2"/>
<organism>
    <name type="scientific">Salmonella choleraesuis (strain SC-B67)</name>
    <dbReference type="NCBI Taxonomy" id="321314"/>
    <lineage>
        <taxon>Bacteria</taxon>
        <taxon>Pseudomonadati</taxon>
        <taxon>Pseudomonadota</taxon>
        <taxon>Gammaproteobacteria</taxon>
        <taxon>Enterobacterales</taxon>
        <taxon>Enterobacteriaceae</taxon>
        <taxon>Salmonella</taxon>
    </lineage>
</organism>
<gene>
    <name evidence="1" type="primary">ubiG</name>
    <name type="ordered locus">SCH_2279</name>
</gene>
<name>UBIG_SALCH</name>
<keyword id="KW-0489">Methyltransferase</keyword>
<keyword id="KW-0949">S-adenosyl-L-methionine</keyword>
<keyword id="KW-0808">Transferase</keyword>
<keyword id="KW-0831">Ubiquinone biosynthesis</keyword>
<dbReference type="EC" id="2.1.1.222" evidence="1"/>
<dbReference type="EC" id="2.1.1.64" evidence="1"/>
<dbReference type="EMBL" id="AE017220">
    <property type="protein sequence ID" value="AAX66185.1"/>
    <property type="status" value="ALT_INIT"/>
    <property type="molecule type" value="Genomic_DNA"/>
</dbReference>
<dbReference type="RefSeq" id="WP_001091008.1">
    <property type="nucleotide sequence ID" value="NC_006905.1"/>
</dbReference>
<dbReference type="SMR" id="Q57M77"/>
<dbReference type="KEGG" id="sec:SCH_2279"/>
<dbReference type="HOGENOM" id="CLU_042432_5_0_6"/>
<dbReference type="UniPathway" id="UPA00232"/>
<dbReference type="Proteomes" id="UP000000538">
    <property type="component" value="Chromosome"/>
</dbReference>
<dbReference type="GO" id="GO:0102208">
    <property type="term" value="F:2-polyprenyl-6-hydroxyphenol methylase activity"/>
    <property type="evidence" value="ECO:0007669"/>
    <property type="project" value="UniProtKB-EC"/>
</dbReference>
<dbReference type="GO" id="GO:0061542">
    <property type="term" value="F:3-demethylubiquinol 3-O-methyltransferase activity"/>
    <property type="evidence" value="ECO:0007669"/>
    <property type="project" value="UniProtKB-UniRule"/>
</dbReference>
<dbReference type="GO" id="GO:0010420">
    <property type="term" value="F:polyprenyldihydroxybenzoate methyltransferase activity"/>
    <property type="evidence" value="ECO:0007669"/>
    <property type="project" value="InterPro"/>
</dbReference>
<dbReference type="GO" id="GO:0032259">
    <property type="term" value="P:methylation"/>
    <property type="evidence" value="ECO:0007669"/>
    <property type="project" value="UniProtKB-KW"/>
</dbReference>
<dbReference type="CDD" id="cd02440">
    <property type="entry name" value="AdoMet_MTases"/>
    <property type="match status" value="1"/>
</dbReference>
<dbReference type="FunFam" id="3.40.50.150:FF:000028">
    <property type="entry name" value="Ubiquinone biosynthesis O-methyltransferase"/>
    <property type="match status" value="1"/>
</dbReference>
<dbReference type="Gene3D" id="3.40.50.150">
    <property type="entry name" value="Vaccinia Virus protein VP39"/>
    <property type="match status" value="1"/>
</dbReference>
<dbReference type="HAMAP" id="MF_00472">
    <property type="entry name" value="UbiG"/>
    <property type="match status" value="1"/>
</dbReference>
<dbReference type="InterPro" id="IPR029063">
    <property type="entry name" value="SAM-dependent_MTases_sf"/>
</dbReference>
<dbReference type="InterPro" id="IPR010233">
    <property type="entry name" value="UbiG_MeTrfase"/>
</dbReference>
<dbReference type="NCBIfam" id="TIGR01983">
    <property type="entry name" value="UbiG"/>
    <property type="match status" value="1"/>
</dbReference>
<dbReference type="PANTHER" id="PTHR43464">
    <property type="entry name" value="METHYLTRANSFERASE"/>
    <property type="match status" value="1"/>
</dbReference>
<dbReference type="PANTHER" id="PTHR43464:SF19">
    <property type="entry name" value="UBIQUINONE BIOSYNTHESIS O-METHYLTRANSFERASE, MITOCHONDRIAL"/>
    <property type="match status" value="1"/>
</dbReference>
<dbReference type="Pfam" id="PF13489">
    <property type="entry name" value="Methyltransf_23"/>
    <property type="match status" value="1"/>
</dbReference>
<dbReference type="SUPFAM" id="SSF53335">
    <property type="entry name" value="S-adenosyl-L-methionine-dependent methyltransferases"/>
    <property type="match status" value="1"/>
</dbReference>
<protein>
    <recommendedName>
        <fullName evidence="1">Ubiquinone biosynthesis O-methyltransferase</fullName>
    </recommendedName>
    <alternativeName>
        <fullName evidence="1">2-polyprenyl-6-hydroxyphenol methylase</fullName>
        <ecNumber evidence="1">2.1.1.222</ecNumber>
    </alternativeName>
    <alternativeName>
        <fullName evidence="1">3-demethylubiquinone 3-O-methyltransferase</fullName>
        <ecNumber evidence="1">2.1.1.64</ecNumber>
    </alternativeName>
</protein>
<feature type="chain" id="PRO_0000241734" description="Ubiquinone biosynthesis O-methyltransferase">
    <location>
        <begin position="1"/>
        <end position="242"/>
    </location>
</feature>
<feature type="binding site" evidence="1">
    <location>
        <position position="44"/>
    </location>
    <ligand>
        <name>S-adenosyl-L-methionine</name>
        <dbReference type="ChEBI" id="CHEBI:59789"/>
    </ligand>
</feature>
<feature type="binding site" evidence="1">
    <location>
        <position position="64"/>
    </location>
    <ligand>
        <name>S-adenosyl-L-methionine</name>
        <dbReference type="ChEBI" id="CHEBI:59789"/>
    </ligand>
</feature>
<feature type="binding site" evidence="1">
    <location>
        <position position="85"/>
    </location>
    <ligand>
        <name>S-adenosyl-L-methionine</name>
        <dbReference type="ChEBI" id="CHEBI:59789"/>
    </ligand>
</feature>
<feature type="binding site" evidence="1">
    <location>
        <position position="129"/>
    </location>
    <ligand>
        <name>S-adenosyl-L-methionine</name>
        <dbReference type="ChEBI" id="CHEBI:59789"/>
    </ligand>
</feature>
<sequence>MNTEKPSVAHNVDHNEIAKFEAVASRWWDLEGEFKPLHRINPLRLGYITERSGGLFGKKVLDVGCGGGILAESMAREGATVTGLDMGFEPLQVAKLHALESGIEVEYMQETVEEHAAKHAQQYDVVTCMEMLEHVPDPQSVVHACAQLVKPGGEVFFSTLNRNGKSWLMAVVGAEYILRMVPKGTHDVKKFIKPAELLSWVDETVLKEQHITGLHYNPITNTFKLGPGVDVNYMLHTRAKKA</sequence>
<accession>Q57M77</accession>